<sequence>MSVHINAAEGQIAETVLLPGDPLRAKYIADTFLEDVVLYNEVRGMYGFTGTYKGKKVSVQGTGMGVPSMSIYANELVQSYGAKNLIRVGTAGGITPDVKVRDVVIAMSASHDMAQNRVRFNGLDYAPTASFDLLHKAYMTAKEHGIDAKVGQIFTTDQFYQDDFHHFKKWADFGCLAIEMEAAGLYTLAAKHKVNALTILTISDHLLTGEETTAEERQTTFNDMMKVALETAIQL</sequence>
<comment type="function">
    <text evidence="2">Catalyzes the reversible phosphorolytic breakdown of the N-glycosidic bond in the beta-(deoxy)ribonucleoside molecules, with the formation of the corresponding free purine bases and pentose-1-phosphate.</text>
</comment>
<comment type="catalytic activity">
    <reaction evidence="2">
        <text>a purine D-ribonucleoside + phosphate = a purine nucleobase + alpha-D-ribose 1-phosphate</text>
        <dbReference type="Rhea" id="RHEA:19805"/>
        <dbReference type="ChEBI" id="CHEBI:26386"/>
        <dbReference type="ChEBI" id="CHEBI:43474"/>
        <dbReference type="ChEBI" id="CHEBI:57720"/>
        <dbReference type="ChEBI" id="CHEBI:142355"/>
        <dbReference type="EC" id="2.4.2.1"/>
    </reaction>
</comment>
<comment type="catalytic activity">
    <reaction evidence="2">
        <text>a purine 2'-deoxy-D-ribonucleoside + phosphate = a purine nucleobase + 2-deoxy-alpha-D-ribose 1-phosphate</text>
        <dbReference type="Rhea" id="RHEA:36431"/>
        <dbReference type="ChEBI" id="CHEBI:26386"/>
        <dbReference type="ChEBI" id="CHEBI:43474"/>
        <dbReference type="ChEBI" id="CHEBI:57259"/>
        <dbReference type="ChEBI" id="CHEBI:142361"/>
        <dbReference type="EC" id="2.4.2.1"/>
    </reaction>
</comment>
<comment type="subunit">
    <text evidence="2">Homohexamer; trimer of homodimers.</text>
</comment>
<comment type="similarity">
    <text evidence="2">Belongs to the PNP/UDP phosphorylase family.</text>
</comment>
<feature type="chain" id="PRO_1000186197" description="Purine nucleoside phosphorylase DeoD-type">
    <location>
        <begin position="1"/>
        <end position="235"/>
    </location>
</feature>
<feature type="active site" description="Proton donor" evidence="2">
    <location>
        <position position="204"/>
    </location>
</feature>
<feature type="binding site" evidence="1">
    <location>
        <position position="4"/>
    </location>
    <ligand>
        <name>a purine D-ribonucleoside</name>
        <dbReference type="ChEBI" id="CHEBI:142355"/>
        <note>ligand shared between dimeric partners</note>
    </ligand>
</feature>
<feature type="binding site" description="in other chain" evidence="1">
    <location>
        <position position="20"/>
    </location>
    <ligand>
        <name>phosphate</name>
        <dbReference type="ChEBI" id="CHEBI:43474"/>
        <note>ligand shared between dimeric partners</note>
    </ligand>
</feature>
<feature type="binding site" description="in other chain" evidence="1">
    <location>
        <position position="24"/>
    </location>
    <ligand>
        <name>phosphate</name>
        <dbReference type="ChEBI" id="CHEBI:43474"/>
        <note>ligand shared between dimeric partners</note>
    </ligand>
</feature>
<feature type="binding site" evidence="1">
    <location>
        <position position="43"/>
    </location>
    <ligand>
        <name>phosphate</name>
        <dbReference type="ChEBI" id="CHEBI:43474"/>
        <note>ligand shared between dimeric partners</note>
    </ligand>
</feature>
<feature type="binding site" description="in other chain" evidence="1">
    <location>
        <begin position="87"/>
        <end position="90"/>
    </location>
    <ligand>
        <name>phosphate</name>
        <dbReference type="ChEBI" id="CHEBI:43474"/>
        <note>ligand shared between dimeric partners</note>
    </ligand>
</feature>
<feature type="binding site" description="in other chain" evidence="1">
    <location>
        <begin position="179"/>
        <end position="181"/>
    </location>
    <ligand>
        <name>a purine D-ribonucleoside</name>
        <dbReference type="ChEBI" id="CHEBI:142355"/>
        <note>ligand shared between dimeric partners</note>
    </ligand>
</feature>
<feature type="binding site" description="in other chain" evidence="1">
    <location>
        <begin position="203"/>
        <end position="204"/>
    </location>
    <ligand>
        <name>a purine D-ribonucleoside</name>
        <dbReference type="ChEBI" id="CHEBI:142355"/>
        <note>ligand shared between dimeric partners</note>
    </ligand>
</feature>
<feature type="site" description="Important for catalytic activity" evidence="2">
    <location>
        <position position="217"/>
    </location>
</feature>
<accession>B1YJP1</accession>
<proteinExistence type="inferred from homology"/>
<reference key="1">
    <citation type="submission" date="2008-04" db="EMBL/GenBank/DDBJ databases">
        <title>Complete sequence of chromosome of Exiguobacterium sibiricum 255-15.</title>
        <authorList>
            <consortium name="US DOE Joint Genome Institute"/>
            <person name="Copeland A."/>
            <person name="Lucas S."/>
            <person name="Lapidus A."/>
            <person name="Glavina del Rio T."/>
            <person name="Dalin E."/>
            <person name="Tice H."/>
            <person name="Bruce D."/>
            <person name="Goodwin L."/>
            <person name="Pitluck S."/>
            <person name="Kiss H."/>
            <person name="Chertkov O."/>
            <person name="Monk C."/>
            <person name="Brettin T."/>
            <person name="Detter J.C."/>
            <person name="Han C."/>
            <person name="Kuske C.R."/>
            <person name="Schmutz J."/>
            <person name="Larimer F."/>
            <person name="Land M."/>
            <person name="Hauser L."/>
            <person name="Kyrpides N."/>
            <person name="Mikhailova N."/>
            <person name="Vishnivetskaya T."/>
            <person name="Rodrigues D.F."/>
            <person name="Gilichinsky D."/>
            <person name="Tiedje J."/>
            <person name="Richardson P."/>
        </authorList>
    </citation>
    <scope>NUCLEOTIDE SEQUENCE [LARGE SCALE GENOMIC DNA]</scope>
    <source>
        <strain>DSM 17290 / CCUG 55495 / CIP 109462 / JCM 13490 / 255-15</strain>
    </source>
</reference>
<keyword id="KW-0328">Glycosyltransferase</keyword>
<keyword id="KW-1185">Reference proteome</keyword>
<keyword id="KW-0808">Transferase</keyword>
<gene>
    <name evidence="2" type="primary">deoD</name>
    <name type="ordered locus">Exig_0590</name>
</gene>
<organism>
    <name type="scientific">Exiguobacterium sibiricum (strain DSM 17290 / CCUG 55495 / CIP 109462 / JCM 13490 / 255-15)</name>
    <dbReference type="NCBI Taxonomy" id="262543"/>
    <lineage>
        <taxon>Bacteria</taxon>
        <taxon>Bacillati</taxon>
        <taxon>Bacillota</taxon>
        <taxon>Bacilli</taxon>
        <taxon>Bacillales</taxon>
        <taxon>Bacillales Family XII. Incertae Sedis</taxon>
        <taxon>Exiguobacterium</taxon>
    </lineage>
</organism>
<protein>
    <recommendedName>
        <fullName evidence="2">Purine nucleoside phosphorylase DeoD-type</fullName>
        <shortName evidence="2">PNP</shortName>
        <ecNumber evidence="2">2.4.2.1</ecNumber>
    </recommendedName>
</protein>
<dbReference type="EC" id="2.4.2.1" evidence="2"/>
<dbReference type="EMBL" id="CP001022">
    <property type="protein sequence ID" value="ACB60071.1"/>
    <property type="molecule type" value="Genomic_DNA"/>
</dbReference>
<dbReference type="RefSeq" id="WP_012369495.1">
    <property type="nucleotide sequence ID" value="NC_010556.1"/>
</dbReference>
<dbReference type="SMR" id="B1YJP1"/>
<dbReference type="STRING" id="262543.Exig_0590"/>
<dbReference type="KEGG" id="esi:Exig_0590"/>
<dbReference type="eggNOG" id="COG0813">
    <property type="taxonomic scope" value="Bacteria"/>
</dbReference>
<dbReference type="HOGENOM" id="CLU_068457_2_0_9"/>
<dbReference type="OrthoDB" id="9782889at2"/>
<dbReference type="Proteomes" id="UP000001681">
    <property type="component" value="Chromosome"/>
</dbReference>
<dbReference type="GO" id="GO:0005829">
    <property type="term" value="C:cytosol"/>
    <property type="evidence" value="ECO:0007669"/>
    <property type="project" value="TreeGrafter"/>
</dbReference>
<dbReference type="GO" id="GO:0004731">
    <property type="term" value="F:purine-nucleoside phosphorylase activity"/>
    <property type="evidence" value="ECO:0007669"/>
    <property type="project" value="UniProtKB-UniRule"/>
</dbReference>
<dbReference type="GO" id="GO:0006152">
    <property type="term" value="P:purine nucleoside catabolic process"/>
    <property type="evidence" value="ECO:0007669"/>
    <property type="project" value="TreeGrafter"/>
</dbReference>
<dbReference type="CDD" id="cd09006">
    <property type="entry name" value="PNP_EcPNPI-like"/>
    <property type="match status" value="1"/>
</dbReference>
<dbReference type="Gene3D" id="3.40.50.1580">
    <property type="entry name" value="Nucleoside phosphorylase domain"/>
    <property type="match status" value="1"/>
</dbReference>
<dbReference type="HAMAP" id="MF_01627">
    <property type="entry name" value="Pur_nucleosid_phosp"/>
    <property type="match status" value="1"/>
</dbReference>
<dbReference type="InterPro" id="IPR004402">
    <property type="entry name" value="DeoD-type"/>
</dbReference>
<dbReference type="InterPro" id="IPR018016">
    <property type="entry name" value="Nucleoside_phosphorylase_CS"/>
</dbReference>
<dbReference type="InterPro" id="IPR000845">
    <property type="entry name" value="Nucleoside_phosphorylase_d"/>
</dbReference>
<dbReference type="InterPro" id="IPR035994">
    <property type="entry name" value="Nucleoside_phosphorylase_sf"/>
</dbReference>
<dbReference type="NCBIfam" id="TIGR00107">
    <property type="entry name" value="deoD"/>
    <property type="match status" value="1"/>
</dbReference>
<dbReference type="NCBIfam" id="NF004489">
    <property type="entry name" value="PRK05819.1"/>
    <property type="match status" value="1"/>
</dbReference>
<dbReference type="PANTHER" id="PTHR43691:SF11">
    <property type="entry name" value="FI09636P-RELATED"/>
    <property type="match status" value="1"/>
</dbReference>
<dbReference type="PANTHER" id="PTHR43691">
    <property type="entry name" value="URIDINE PHOSPHORYLASE"/>
    <property type="match status" value="1"/>
</dbReference>
<dbReference type="Pfam" id="PF01048">
    <property type="entry name" value="PNP_UDP_1"/>
    <property type="match status" value="1"/>
</dbReference>
<dbReference type="SUPFAM" id="SSF53167">
    <property type="entry name" value="Purine and uridine phosphorylases"/>
    <property type="match status" value="1"/>
</dbReference>
<dbReference type="PROSITE" id="PS01232">
    <property type="entry name" value="PNP_UDP_1"/>
    <property type="match status" value="1"/>
</dbReference>
<name>DEOD_EXIS2</name>
<evidence type="ECO:0000250" key="1">
    <source>
        <dbReference type="UniProtKB" id="P50389"/>
    </source>
</evidence>
<evidence type="ECO:0000255" key="2">
    <source>
        <dbReference type="HAMAP-Rule" id="MF_01627"/>
    </source>
</evidence>